<proteinExistence type="inferred from homology"/>
<evidence type="ECO:0000255" key="1">
    <source>
        <dbReference type="HAMAP-Rule" id="MF_01368"/>
    </source>
</evidence>
<evidence type="ECO:0000305" key="2"/>
<protein>
    <recommendedName>
        <fullName evidence="1">Large ribosomal subunit protein bL17</fullName>
    </recommendedName>
    <alternativeName>
        <fullName evidence="2">50S ribosomal protein L17</fullName>
    </alternativeName>
</protein>
<gene>
    <name evidence="1" type="primary">rplQ</name>
    <name type="ordered locus">ABC0178</name>
</gene>
<keyword id="KW-1185">Reference proteome</keyword>
<keyword id="KW-0687">Ribonucleoprotein</keyword>
<keyword id="KW-0689">Ribosomal protein</keyword>
<organism>
    <name type="scientific">Shouchella clausii (strain KSM-K16)</name>
    <name type="common">Alkalihalobacillus clausii</name>
    <dbReference type="NCBI Taxonomy" id="66692"/>
    <lineage>
        <taxon>Bacteria</taxon>
        <taxon>Bacillati</taxon>
        <taxon>Bacillota</taxon>
        <taxon>Bacilli</taxon>
        <taxon>Bacillales</taxon>
        <taxon>Bacillaceae</taxon>
        <taxon>Shouchella</taxon>
    </lineage>
</organism>
<name>RL17_SHOC1</name>
<sequence>MAYAKLGRTSSQRKALLRDLVTDLIINERIETTEAKAKELRPIVEKMITLGKRGDLHARRQAAAFVRNEIADVESGQDAIQKLFADIAPRFAERQGGYTRILKVGPRRGDGAPMAIIEFV</sequence>
<reference key="1">
    <citation type="submission" date="2003-10" db="EMBL/GenBank/DDBJ databases">
        <title>The complete genome sequence of the alkaliphilic Bacillus clausii KSM-K16.</title>
        <authorList>
            <person name="Takaki Y."/>
            <person name="Kageyama Y."/>
            <person name="Shimamura S."/>
            <person name="Suzuki H."/>
            <person name="Nishi S."/>
            <person name="Hatada Y."/>
            <person name="Kawai S."/>
            <person name="Ito S."/>
            <person name="Horikoshi K."/>
        </authorList>
    </citation>
    <scope>NUCLEOTIDE SEQUENCE [LARGE SCALE GENOMIC DNA]</scope>
    <source>
        <strain>KSM-K16</strain>
    </source>
</reference>
<accession>Q5WLN4</accession>
<dbReference type="EMBL" id="AP006627">
    <property type="protein sequence ID" value="BAD62721.1"/>
    <property type="molecule type" value="Genomic_DNA"/>
</dbReference>
<dbReference type="RefSeq" id="WP_011245041.1">
    <property type="nucleotide sequence ID" value="NC_006582.1"/>
</dbReference>
<dbReference type="SMR" id="Q5WLN4"/>
<dbReference type="STRING" id="66692.ABC0178"/>
<dbReference type="KEGG" id="bcl:ABC0178"/>
<dbReference type="eggNOG" id="COG0203">
    <property type="taxonomic scope" value="Bacteria"/>
</dbReference>
<dbReference type="HOGENOM" id="CLU_074407_2_2_9"/>
<dbReference type="OrthoDB" id="9809073at2"/>
<dbReference type="Proteomes" id="UP000001168">
    <property type="component" value="Chromosome"/>
</dbReference>
<dbReference type="GO" id="GO:0022625">
    <property type="term" value="C:cytosolic large ribosomal subunit"/>
    <property type="evidence" value="ECO:0007669"/>
    <property type="project" value="TreeGrafter"/>
</dbReference>
<dbReference type="GO" id="GO:0003735">
    <property type="term" value="F:structural constituent of ribosome"/>
    <property type="evidence" value="ECO:0007669"/>
    <property type="project" value="InterPro"/>
</dbReference>
<dbReference type="GO" id="GO:0006412">
    <property type="term" value="P:translation"/>
    <property type="evidence" value="ECO:0007669"/>
    <property type="project" value="UniProtKB-UniRule"/>
</dbReference>
<dbReference type="FunFam" id="3.90.1030.10:FF:000002">
    <property type="entry name" value="50S ribosomal protein L17"/>
    <property type="match status" value="1"/>
</dbReference>
<dbReference type="Gene3D" id="3.90.1030.10">
    <property type="entry name" value="Ribosomal protein L17"/>
    <property type="match status" value="1"/>
</dbReference>
<dbReference type="HAMAP" id="MF_01368">
    <property type="entry name" value="Ribosomal_bL17"/>
    <property type="match status" value="1"/>
</dbReference>
<dbReference type="InterPro" id="IPR000456">
    <property type="entry name" value="Ribosomal_bL17"/>
</dbReference>
<dbReference type="InterPro" id="IPR047859">
    <property type="entry name" value="Ribosomal_bL17_CS"/>
</dbReference>
<dbReference type="InterPro" id="IPR036373">
    <property type="entry name" value="Ribosomal_bL17_sf"/>
</dbReference>
<dbReference type="NCBIfam" id="TIGR00059">
    <property type="entry name" value="L17"/>
    <property type="match status" value="1"/>
</dbReference>
<dbReference type="PANTHER" id="PTHR14413:SF16">
    <property type="entry name" value="LARGE RIBOSOMAL SUBUNIT PROTEIN BL17M"/>
    <property type="match status" value="1"/>
</dbReference>
<dbReference type="PANTHER" id="PTHR14413">
    <property type="entry name" value="RIBOSOMAL PROTEIN L17"/>
    <property type="match status" value="1"/>
</dbReference>
<dbReference type="Pfam" id="PF01196">
    <property type="entry name" value="Ribosomal_L17"/>
    <property type="match status" value="1"/>
</dbReference>
<dbReference type="SUPFAM" id="SSF64263">
    <property type="entry name" value="Prokaryotic ribosomal protein L17"/>
    <property type="match status" value="1"/>
</dbReference>
<dbReference type="PROSITE" id="PS01167">
    <property type="entry name" value="RIBOSOMAL_L17"/>
    <property type="match status" value="1"/>
</dbReference>
<feature type="chain" id="PRO_0000267825" description="Large ribosomal subunit protein bL17">
    <location>
        <begin position="1"/>
        <end position="120"/>
    </location>
</feature>
<comment type="subunit">
    <text evidence="1">Part of the 50S ribosomal subunit. Contacts protein L32.</text>
</comment>
<comment type="similarity">
    <text evidence="1">Belongs to the bacterial ribosomal protein bL17 family.</text>
</comment>